<accession>A1JPU6</accession>
<gene>
    <name type="ordered locus">YE3436</name>
</gene>
<comment type="similarity">
    <text evidence="1">Belongs to the UPF0235 family.</text>
</comment>
<organism>
    <name type="scientific">Yersinia enterocolitica serotype O:8 / biotype 1B (strain NCTC 13174 / 8081)</name>
    <dbReference type="NCBI Taxonomy" id="393305"/>
    <lineage>
        <taxon>Bacteria</taxon>
        <taxon>Pseudomonadati</taxon>
        <taxon>Pseudomonadota</taxon>
        <taxon>Gammaproteobacteria</taxon>
        <taxon>Enterobacterales</taxon>
        <taxon>Yersiniaceae</taxon>
        <taxon>Yersinia</taxon>
    </lineage>
</organism>
<feature type="chain" id="PRO_1000056796" description="UPF0235 protein YE3436">
    <location>
        <begin position="1"/>
        <end position="96"/>
    </location>
</feature>
<proteinExistence type="inferred from homology"/>
<protein>
    <recommendedName>
        <fullName evidence="1">UPF0235 protein YE3436</fullName>
    </recommendedName>
</protein>
<dbReference type="EMBL" id="AM286415">
    <property type="protein sequence ID" value="CAL13460.1"/>
    <property type="molecule type" value="Genomic_DNA"/>
</dbReference>
<dbReference type="RefSeq" id="YP_001007602.1">
    <property type="nucleotide sequence ID" value="NC_008800.1"/>
</dbReference>
<dbReference type="SMR" id="A1JPU6"/>
<dbReference type="KEGG" id="yen:YE3436"/>
<dbReference type="PATRIC" id="fig|393305.7.peg.3649"/>
<dbReference type="eggNOG" id="COG1872">
    <property type="taxonomic scope" value="Bacteria"/>
</dbReference>
<dbReference type="HOGENOM" id="CLU_130694_5_0_6"/>
<dbReference type="OrthoDB" id="9800587at2"/>
<dbReference type="Proteomes" id="UP000000642">
    <property type="component" value="Chromosome"/>
</dbReference>
<dbReference type="GO" id="GO:0005737">
    <property type="term" value="C:cytoplasm"/>
    <property type="evidence" value="ECO:0007669"/>
    <property type="project" value="TreeGrafter"/>
</dbReference>
<dbReference type="Gene3D" id="3.30.1200.10">
    <property type="entry name" value="YggU-like"/>
    <property type="match status" value="1"/>
</dbReference>
<dbReference type="HAMAP" id="MF_00634">
    <property type="entry name" value="UPF0235"/>
    <property type="match status" value="1"/>
</dbReference>
<dbReference type="InterPro" id="IPR003746">
    <property type="entry name" value="DUF167"/>
</dbReference>
<dbReference type="InterPro" id="IPR036591">
    <property type="entry name" value="YggU-like_sf"/>
</dbReference>
<dbReference type="NCBIfam" id="TIGR00251">
    <property type="entry name" value="DUF167 family protein"/>
    <property type="match status" value="1"/>
</dbReference>
<dbReference type="NCBIfam" id="NF003466">
    <property type="entry name" value="PRK05090.1"/>
    <property type="match status" value="1"/>
</dbReference>
<dbReference type="PANTHER" id="PTHR13420">
    <property type="entry name" value="UPF0235 PROTEIN C15ORF40"/>
    <property type="match status" value="1"/>
</dbReference>
<dbReference type="PANTHER" id="PTHR13420:SF7">
    <property type="entry name" value="UPF0235 PROTEIN C15ORF40"/>
    <property type="match status" value="1"/>
</dbReference>
<dbReference type="Pfam" id="PF02594">
    <property type="entry name" value="DUF167"/>
    <property type="match status" value="1"/>
</dbReference>
<dbReference type="SMART" id="SM01152">
    <property type="entry name" value="DUF167"/>
    <property type="match status" value="1"/>
</dbReference>
<dbReference type="SUPFAM" id="SSF69786">
    <property type="entry name" value="YggU-like"/>
    <property type="match status" value="1"/>
</dbReference>
<name>Y3436_YERE8</name>
<sequence>MSAVTPLLDGLALRLYIQPKASRDQIVGLHGDELKVAITAPPVDGQANAHLIKFIAKQFRVAKSQVIIEKGELGRHKQIKIVNPQQIPPEVATLLE</sequence>
<evidence type="ECO:0000255" key="1">
    <source>
        <dbReference type="HAMAP-Rule" id="MF_00634"/>
    </source>
</evidence>
<reference key="1">
    <citation type="journal article" date="2006" name="PLoS Genet.">
        <title>The complete genome sequence and comparative genome analysis of the high pathogenicity Yersinia enterocolitica strain 8081.</title>
        <authorList>
            <person name="Thomson N.R."/>
            <person name="Howard S."/>
            <person name="Wren B.W."/>
            <person name="Holden M.T.G."/>
            <person name="Crossman L."/>
            <person name="Challis G.L."/>
            <person name="Churcher C."/>
            <person name="Mungall K."/>
            <person name="Brooks K."/>
            <person name="Chillingworth T."/>
            <person name="Feltwell T."/>
            <person name="Abdellah Z."/>
            <person name="Hauser H."/>
            <person name="Jagels K."/>
            <person name="Maddison M."/>
            <person name="Moule S."/>
            <person name="Sanders M."/>
            <person name="Whitehead S."/>
            <person name="Quail M.A."/>
            <person name="Dougan G."/>
            <person name="Parkhill J."/>
            <person name="Prentice M.B."/>
        </authorList>
    </citation>
    <scope>NUCLEOTIDE SEQUENCE [LARGE SCALE GENOMIC DNA]</scope>
    <source>
        <strain>NCTC 13174 / 8081</strain>
    </source>
</reference>